<proteinExistence type="evidence at protein level"/>
<name>OCE1_LEPOE</name>
<dbReference type="SMR" id="P83951"/>
<dbReference type="GO" id="GO:0005576">
    <property type="term" value="C:extracellular region"/>
    <property type="evidence" value="ECO:0007669"/>
    <property type="project" value="UniProtKB-SubCell"/>
</dbReference>
<dbReference type="GO" id="GO:0042742">
    <property type="term" value="P:defense response to bacterium"/>
    <property type="evidence" value="ECO:0007669"/>
    <property type="project" value="UniProtKB-KW"/>
</dbReference>
<dbReference type="GO" id="GO:0019836">
    <property type="term" value="P:symbiont-mediated hemolysis of host erythrocyte"/>
    <property type="evidence" value="ECO:0007669"/>
    <property type="project" value="InterPro"/>
</dbReference>
<dbReference type="InterPro" id="IPR012518">
    <property type="entry name" value="Antimicrobial15"/>
</dbReference>
<dbReference type="Pfam" id="PF08110">
    <property type="entry name" value="Antimicrobial15"/>
    <property type="match status" value="1"/>
</dbReference>
<organism>
    <name type="scientific">Leptodactylus ocellatus</name>
    <name type="common">Argus frog</name>
    <name type="synonym">Leptodactylus macrosternum</name>
    <dbReference type="NCBI Taxonomy" id="928525"/>
    <lineage>
        <taxon>Eukaryota</taxon>
        <taxon>Metazoa</taxon>
        <taxon>Chordata</taxon>
        <taxon>Craniata</taxon>
        <taxon>Vertebrata</taxon>
        <taxon>Euteleostomi</taxon>
        <taxon>Amphibia</taxon>
        <taxon>Batrachia</taxon>
        <taxon>Anura</taxon>
        <taxon>Neobatrachia</taxon>
        <taxon>Hyloidea</taxon>
        <taxon>Leptodactylidae</taxon>
        <taxon>Leptodactylinae</taxon>
        <taxon>Leptodactylus</taxon>
    </lineage>
</organism>
<feature type="peptide" id="PRO_0000043815" description="Ocellatin-1">
    <location>
        <begin position="1"/>
        <end position="25"/>
    </location>
</feature>
<feature type="modified residue" description="Valine amide" evidence="1">
    <location>
        <position position="25"/>
    </location>
</feature>
<sequence length="25" mass="2560">GVVDILKGAGKDLLAHLVGKISEKV</sequence>
<comment type="function">
    <text evidence="1 2">Has hemolytic activity against human erythrocytes and antibacterial activity against the Gram-negative bacterium E.coli.</text>
</comment>
<comment type="subcellular location">
    <subcellularLocation>
        <location evidence="1 2">Secreted</location>
    </subcellularLocation>
</comment>
<comment type="tissue specificity">
    <text evidence="1 2">Expressed by the skin dorsal glands.</text>
</comment>
<comment type="mass spectrometry" mass="2559.19" method="Electrospray" evidence="1 2"/>
<comment type="similarity">
    <text evidence="2">Belongs to the frog skin active peptide (FSAP) family. Ocellatin subfamily.</text>
</comment>
<comment type="online information" name="The antimicrobial peptide database">
    <link uri="https://wangapd3.com/database/query_output.php?ID=00543"/>
</comment>
<accession>P83951</accession>
<reference key="1">
    <citation type="journal article" date="2004" name="Protein J.">
        <title>Ocellatins: new antimicrobial peptides from the skin secretion of the South American frog Leptodactylus ocellatus (Anura: Leptodactylidae).</title>
        <authorList>
            <person name="Nascimento A.C.C."/>
            <person name="Zanotta L.C."/>
            <person name="Kyaw C.M."/>
            <person name="Schwartz E.N.F."/>
            <person name="Schwartz C.A."/>
            <person name="Sebben A."/>
            <person name="Sousa M.V."/>
            <person name="Fontes W."/>
            <person name="Castro M.S."/>
        </authorList>
    </citation>
    <scope>PROTEIN SEQUENCE</scope>
    <scope>FUNCTION</scope>
    <scope>SUBCELLULAR LOCATION</scope>
    <scope>TISSUE SPECIFICITY</scope>
    <scope>MASS SPECTROMETRY</scope>
    <scope>AMIDATION AT VAL-25</scope>
    <source>
        <tissue>Skin secretion</tissue>
    </source>
</reference>
<evidence type="ECO:0000269" key="1">
    <source>
    </source>
</evidence>
<evidence type="ECO:0000305" key="2"/>
<keyword id="KW-0027">Amidation</keyword>
<keyword id="KW-0878">Amphibian defense peptide</keyword>
<keyword id="KW-0044">Antibiotic</keyword>
<keyword id="KW-0929">Antimicrobial</keyword>
<keyword id="KW-0204">Cytolysis</keyword>
<keyword id="KW-0903">Direct protein sequencing</keyword>
<keyword id="KW-0354">Hemolysis</keyword>
<keyword id="KW-0964">Secreted</keyword>
<protein>
    <recommendedName>
        <fullName>Ocellatin-1</fullName>
    </recommendedName>
</protein>